<keyword id="KW-0067">ATP-binding</keyword>
<keyword id="KW-0131">Cell cycle</keyword>
<keyword id="KW-0132">Cell division</keyword>
<keyword id="KW-0133">Cell shape</keyword>
<keyword id="KW-0961">Cell wall biogenesis/degradation</keyword>
<keyword id="KW-0963">Cytoplasm</keyword>
<keyword id="KW-0436">Ligase</keyword>
<keyword id="KW-0460">Magnesium</keyword>
<keyword id="KW-0547">Nucleotide-binding</keyword>
<keyword id="KW-0573">Peptidoglycan synthesis</keyword>
<proteinExistence type="inferred from homology"/>
<sequence length="483" mass="52941">MHLDQLLRDIPAKIYGKVESIPVRNLTRDSRCTGVGDIFIARQGQMCNGNDYSGQAVENGAIAILSSLYNPFLSVVQIVTEDLTALEACLAARFYNDPSKRLDVIGVTGTNGKTTVSALARELMEYKGRCTGLVGTIEHILGEHRIIDSFTTPDAILLQKYFAEMVKQNLSSAVVEVSSIGLALGRVRETEFLAGVLTNVSLDHLDFHGSFEEYVVAKKQLFVSLPEHGVAVVNSDCEYAQSFLEISPARGVSYAVHQEADYRAVNLKFSSLGSTFDILYQGNVFSCETSLVGEHNVYNVLAALSVVHQILGGDFAELVHYVRYLSAPKGRLEPVLSGPCPIYIDYAHTPDALDNVCKILSQLLPADGRLIIVFGCGGDRDHSKRPIMAKVAETYGFSVVTSDNPRTEDPDQIIADICSGFSTDRYVIESDRRLAIVKAISMALDKDIVLVAGKGHEVYQIFKHQTIVFDDREVVCEALASIY</sequence>
<evidence type="ECO:0000255" key="1">
    <source>
        <dbReference type="HAMAP-Rule" id="MF_00208"/>
    </source>
</evidence>
<name>MURE_CHLMU</name>
<feature type="chain" id="PRO_0000101880" description="UDP-N-acetylmuramoyl-L-alanyl-D-glutamate--2,6-diaminopimelate ligase">
    <location>
        <begin position="1"/>
        <end position="483"/>
    </location>
</feature>
<feature type="short sequence motif" description="Meso-diaminopimelate recognition motif">
    <location>
        <begin position="403"/>
        <end position="406"/>
    </location>
</feature>
<feature type="binding site" evidence="1">
    <location>
        <position position="30"/>
    </location>
    <ligand>
        <name>UDP-N-acetyl-alpha-D-muramoyl-L-alanyl-D-glutamate</name>
        <dbReference type="ChEBI" id="CHEBI:83900"/>
    </ligand>
</feature>
<feature type="binding site" evidence="1">
    <location>
        <begin position="109"/>
        <end position="115"/>
    </location>
    <ligand>
        <name>ATP</name>
        <dbReference type="ChEBI" id="CHEBI:30616"/>
    </ligand>
</feature>
<feature type="binding site" evidence="1">
    <location>
        <begin position="151"/>
        <end position="152"/>
    </location>
    <ligand>
        <name>UDP-N-acetyl-alpha-D-muramoyl-L-alanyl-D-glutamate</name>
        <dbReference type="ChEBI" id="CHEBI:83900"/>
    </ligand>
</feature>
<feature type="binding site" evidence="1">
    <location>
        <position position="178"/>
    </location>
    <ligand>
        <name>UDP-N-acetyl-alpha-D-muramoyl-L-alanyl-D-glutamate</name>
        <dbReference type="ChEBI" id="CHEBI:83900"/>
    </ligand>
</feature>
<feature type="binding site" evidence="1">
    <location>
        <position position="186"/>
    </location>
    <ligand>
        <name>UDP-N-acetyl-alpha-D-muramoyl-L-alanyl-D-glutamate</name>
        <dbReference type="ChEBI" id="CHEBI:83900"/>
    </ligand>
</feature>
<feature type="binding site" evidence="1">
    <location>
        <position position="380"/>
    </location>
    <ligand>
        <name>meso-2,6-diaminopimelate</name>
        <dbReference type="ChEBI" id="CHEBI:57791"/>
    </ligand>
</feature>
<feature type="binding site" evidence="1">
    <location>
        <begin position="403"/>
        <end position="406"/>
    </location>
    <ligand>
        <name>meso-2,6-diaminopimelate</name>
        <dbReference type="ChEBI" id="CHEBI:57791"/>
    </ligand>
</feature>
<feature type="binding site" evidence="1">
    <location>
        <position position="453"/>
    </location>
    <ligand>
        <name>meso-2,6-diaminopimelate</name>
        <dbReference type="ChEBI" id="CHEBI:57791"/>
    </ligand>
</feature>
<feature type="binding site" evidence="1">
    <location>
        <position position="457"/>
    </location>
    <ligand>
        <name>meso-2,6-diaminopimelate</name>
        <dbReference type="ChEBI" id="CHEBI:57791"/>
    </ligand>
</feature>
<feature type="modified residue" description="N6-carboxylysine" evidence="1">
    <location>
        <position position="218"/>
    </location>
</feature>
<comment type="function">
    <text evidence="1">Catalyzes the addition of meso-diaminopimelic acid to the nucleotide precursor UDP-N-acetylmuramoyl-L-alanyl-D-glutamate (UMAG) in the biosynthesis of bacterial cell-wall peptidoglycan.</text>
</comment>
<comment type="catalytic activity">
    <reaction evidence="1">
        <text>UDP-N-acetyl-alpha-D-muramoyl-L-alanyl-D-glutamate + meso-2,6-diaminopimelate + ATP = UDP-N-acetyl-alpha-D-muramoyl-L-alanyl-gamma-D-glutamyl-meso-2,6-diaminopimelate + ADP + phosphate + H(+)</text>
        <dbReference type="Rhea" id="RHEA:23676"/>
        <dbReference type="ChEBI" id="CHEBI:15378"/>
        <dbReference type="ChEBI" id="CHEBI:30616"/>
        <dbReference type="ChEBI" id="CHEBI:43474"/>
        <dbReference type="ChEBI" id="CHEBI:57791"/>
        <dbReference type="ChEBI" id="CHEBI:83900"/>
        <dbReference type="ChEBI" id="CHEBI:83905"/>
        <dbReference type="ChEBI" id="CHEBI:456216"/>
        <dbReference type="EC" id="6.3.2.13"/>
    </reaction>
</comment>
<comment type="cofactor">
    <cofactor evidence="1">
        <name>Mg(2+)</name>
        <dbReference type="ChEBI" id="CHEBI:18420"/>
    </cofactor>
</comment>
<comment type="pathway">
    <text evidence="1">Cell wall biogenesis; peptidoglycan biosynthesis.</text>
</comment>
<comment type="subcellular location">
    <subcellularLocation>
        <location evidence="1">Cytoplasm</location>
    </subcellularLocation>
</comment>
<comment type="PTM">
    <text evidence="1">Carboxylation is probably crucial for Mg(2+) binding and, consequently, for the gamma-phosphate positioning of ATP.</text>
</comment>
<comment type="similarity">
    <text evidence="1">Belongs to the MurCDEF family. MurE subfamily.</text>
</comment>
<dbReference type="EC" id="6.3.2.13" evidence="1"/>
<dbReference type="EMBL" id="AE002160">
    <property type="protein sequence ID" value="AAF39380.1"/>
    <property type="molecule type" value="Genomic_DNA"/>
</dbReference>
<dbReference type="PIR" id="H81691">
    <property type="entry name" value="H81691"/>
</dbReference>
<dbReference type="RefSeq" id="WP_010230785.1">
    <property type="nucleotide sequence ID" value="NZ_CP063055.1"/>
</dbReference>
<dbReference type="SMR" id="Q9PKC6"/>
<dbReference type="GeneID" id="1245900"/>
<dbReference type="KEGG" id="cmu:TC_0540"/>
<dbReference type="eggNOG" id="COG0769">
    <property type="taxonomic scope" value="Bacteria"/>
</dbReference>
<dbReference type="HOGENOM" id="CLU_022291_4_1_0"/>
<dbReference type="OrthoDB" id="9800958at2"/>
<dbReference type="UniPathway" id="UPA00219"/>
<dbReference type="Proteomes" id="UP000000800">
    <property type="component" value="Chromosome"/>
</dbReference>
<dbReference type="GO" id="GO:0005737">
    <property type="term" value="C:cytoplasm"/>
    <property type="evidence" value="ECO:0007669"/>
    <property type="project" value="UniProtKB-SubCell"/>
</dbReference>
<dbReference type="GO" id="GO:0005524">
    <property type="term" value="F:ATP binding"/>
    <property type="evidence" value="ECO:0007669"/>
    <property type="project" value="UniProtKB-UniRule"/>
</dbReference>
<dbReference type="GO" id="GO:0000287">
    <property type="term" value="F:magnesium ion binding"/>
    <property type="evidence" value="ECO:0007669"/>
    <property type="project" value="UniProtKB-UniRule"/>
</dbReference>
<dbReference type="GO" id="GO:0008765">
    <property type="term" value="F:UDP-N-acetylmuramoylalanyl-D-glutamate-2,6-diaminopimelate ligase activity"/>
    <property type="evidence" value="ECO:0007669"/>
    <property type="project" value="UniProtKB-UniRule"/>
</dbReference>
<dbReference type="GO" id="GO:0051301">
    <property type="term" value="P:cell division"/>
    <property type="evidence" value="ECO:0007669"/>
    <property type="project" value="UniProtKB-KW"/>
</dbReference>
<dbReference type="GO" id="GO:0071555">
    <property type="term" value="P:cell wall organization"/>
    <property type="evidence" value="ECO:0007669"/>
    <property type="project" value="UniProtKB-KW"/>
</dbReference>
<dbReference type="GO" id="GO:0009252">
    <property type="term" value="P:peptidoglycan biosynthetic process"/>
    <property type="evidence" value="ECO:0007669"/>
    <property type="project" value="UniProtKB-UniRule"/>
</dbReference>
<dbReference type="GO" id="GO:0008360">
    <property type="term" value="P:regulation of cell shape"/>
    <property type="evidence" value="ECO:0007669"/>
    <property type="project" value="UniProtKB-KW"/>
</dbReference>
<dbReference type="Gene3D" id="3.90.190.20">
    <property type="entry name" value="Mur ligase, C-terminal domain"/>
    <property type="match status" value="1"/>
</dbReference>
<dbReference type="Gene3D" id="3.40.1190.10">
    <property type="entry name" value="Mur-like, catalytic domain"/>
    <property type="match status" value="1"/>
</dbReference>
<dbReference type="Gene3D" id="3.40.1390.10">
    <property type="entry name" value="MurE/MurF, N-terminal domain"/>
    <property type="match status" value="1"/>
</dbReference>
<dbReference type="HAMAP" id="MF_00208">
    <property type="entry name" value="MurE"/>
    <property type="match status" value="1"/>
</dbReference>
<dbReference type="InterPro" id="IPR036565">
    <property type="entry name" value="Mur-like_cat_sf"/>
</dbReference>
<dbReference type="InterPro" id="IPR004101">
    <property type="entry name" value="Mur_ligase_C"/>
</dbReference>
<dbReference type="InterPro" id="IPR036615">
    <property type="entry name" value="Mur_ligase_C_dom_sf"/>
</dbReference>
<dbReference type="InterPro" id="IPR013221">
    <property type="entry name" value="Mur_ligase_cen"/>
</dbReference>
<dbReference type="InterPro" id="IPR035911">
    <property type="entry name" value="MurE/MurF_N"/>
</dbReference>
<dbReference type="InterPro" id="IPR005761">
    <property type="entry name" value="UDP-N-AcMur-Glu-dNH2Pim_ligase"/>
</dbReference>
<dbReference type="NCBIfam" id="TIGR01085">
    <property type="entry name" value="murE"/>
    <property type="match status" value="1"/>
</dbReference>
<dbReference type="NCBIfam" id="NF001126">
    <property type="entry name" value="PRK00139.1-4"/>
    <property type="match status" value="1"/>
</dbReference>
<dbReference type="PANTHER" id="PTHR23135">
    <property type="entry name" value="MUR LIGASE FAMILY MEMBER"/>
    <property type="match status" value="1"/>
</dbReference>
<dbReference type="PANTHER" id="PTHR23135:SF4">
    <property type="entry name" value="UDP-N-ACETYLMURAMOYL-L-ALANYL-D-GLUTAMATE--2,6-DIAMINOPIMELATE LIGASE MURE HOMOLOG, CHLOROPLASTIC"/>
    <property type="match status" value="1"/>
</dbReference>
<dbReference type="Pfam" id="PF02875">
    <property type="entry name" value="Mur_ligase_C"/>
    <property type="match status" value="1"/>
</dbReference>
<dbReference type="Pfam" id="PF08245">
    <property type="entry name" value="Mur_ligase_M"/>
    <property type="match status" value="1"/>
</dbReference>
<dbReference type="SUPFAM" id="SSF53623">
    <property type="entry name" value="MurD-like peptide ligases, catalytic domain"/>
    <property type="match status" value="1"/>
</dbReference>
<dbReference type="SUPFAM" id="SSF53244">
    <property type="entry name" value="MurD-like peptide ligases, peptide-binding domain"/>
    <property type="match status" value="1"/>
</dbReference>
<dbReference type="SUPFAM" id="SSF63418">
    <property type="entry name" value="MurE/MurF N-terminal domain"/>
    <property type="match status" value="1"/>
</dbReference>
<gene>
    <name evidence="1" type="primary">murE</name>
    <name type="ordered locus">TC_0540</name>
</gene>
<protein>
    <recommendedName>
        <fullName evidence="1">UDP-N-acetylmuramoyl-L-alanyl-D-glutamate--2,6-diaminopimelate ligase</fullName>
        <ecNumber evidence="1">6.3.2.13</ecNumber>
    </recommendedName>
    <alternativeName>
        <fullName evidence="1">Meso-A2pm-adding enzyme</fullName>
    </alternativeName>
    <alternativeName>
        <fullName evidence="1">Meso-diaminopimelate-adding enzyme</fullName>
    </alternativeName>
    <alternativeName>
        <fullName evidence="1">UDP-MurNAc-L-Ala-D-Glu:meso-diaminopimelate ligase</fullName>
    </alternativeName>
    <alternativeName>
        <fullName evidence="1">UDP-MurNAc-tripeptide synthetase</fullName>
    </alternativeName>
    <alternativeName>
        <fullName evidence="1">UDP-N-acetylmuramyl-tripeptide synthetase</fullName>
    </alternativeName>
</protein>
<organism>
    <name type="scientific">Chlamydia muridarum (strain MoPn / Nigg)</name>
    <dbReference type="NCBI Taxonomy" id="243161"/>
    <lineage>
        <taxon>Bacteria</taxon>
        <taxon>Pseudomonadati</taxon>
        <taxon>Chlamydiota</taxon>
        <taxon>Chlamydiia</taxon>
        <taxon>Chlamydiales</taxon>
        <taxon>Chlamydiaceae</taxon>
        <taxon>Chlamydia/Chlamydophila group</taxon>
        <taxon>Chlamydia</taxon>
    </lineage>
</organism>
<accession>Q9PKC6</accession>
<reference key="1">
    <citation type="journal article" date="2000" name="Nucleic Acids Res.">
        <title>Genome sequences of Chlamydia trachomatis MoPn and Chlamydia pneumoniae AR39.</title>
        <authorList>
            <person name="Read T.D."/>
            <person name="Brunham R.C."/>
            <person name="Shen C."/>
            <person name="Gill S.R."/>
            <person name="Heidelberg J.F."/>
            <person name="White O."/>
            <person name="Hickey E.K."/>
            <person name="Peterson J.D."/>
            <person name="Utterback T.R."/>
            <person name="Berry K.J."/>
            <person name="Bass S."/>
            <person name="Linher K.D."/>
            <person name="Weidman J.F."/>
            <person name="Khouri H.M."/>
            <person name="Craven B."/>
            <person name="Bowman C."/>
            <person name="Dodson R.J."/>
            <person name="Gwinn M.L."/>
            <person name="Nelson W.C."/>
            <person name="DeBoy R.T."/>
            <person name="Kolonay J.F."/>
            <person name="McClarty G."/>
            <person name="Salzberg S.L."/>
            <person name="Eisen J.A."/>
            <person name="Fraser C.M."/>
        </authorList>
    </citation>
    <scope>NUCLEOTIDE SEQUENCE [LARGE SCALE GENOMIC DNA]</scope>
    <source>
        <strain>MoPn / Nigg</strain>
    </source>
</reference>